<feature type="chain" id="PRO_1000019438" description="Cysteine desulfurase IscS">
    <location>
        <begin position="1"/>
        <end position="404"/>
    </location>
</feature>
<feature type="active site" description="Cysteine persulfide intermediate" evidence="1">
    <location>
        <position position="328"/>
    </location>
</feature>
<feature type="binding site" evidence="1">
    <location>
        <begin position="75"/>
        <end position="76"/>
    </location>
    <ligand>
        <name>pyridoxal 5'-phosphate</name>
        <dbReference type="ChEBI" id="CHEBI:597326"/>
    </ligand>
</feature>
<feature type="binding site" evidence="1">
    <location>
        <position position="155"/>
    </location>
    <ligand>
        <name>pyridoxal 5'-phosphate</name>
        <dbReference type="ChEBI" id="CHEBI:597326"/>
    </ligand>
</feature>
<feature type="binding site" evidence="1">
    <location>
        <position position="183"/>
    </location>
    <ligand>
        <name>pyridoxal 5'-phosphate</name>
        <dbReference type="ChEBI" id="CHEBI:597326"/>
    </ligand>
</feature>
<feature type="binding site" evidence="1">
    <location>
        <begin position="203"/>
        <end position="205"/>
    </location>
    <ligand>
        <name>pyridoxal 5'-phosphate</name>
        <dbReference type="ChEBI" id="CHEBI:597326"/>
    </ligand>
</feature>
<feature type="binding site" evidence="1">
    <location>
        <position position="243"/>
    </location>
    <ligand>
        <name>pyridoxal 5'-phosphate</name>
        <dbReference type="ChEBI" id="CHEBI:597326"/>
    </ligand>
</feature>
<feature type="binding site" description="via persulfide group" evidence="1">
    <location>
        <position position="328"/>
    </location>
    <ligand>
        <name>[2Fe-2S] cluster</name>
        <dbReference type="ChEBI" id="CHEBI:190135"/>
        <note>ligand shared with IscU</note>
    </ligand>
</feature>
<feature type="modified residue" description="N6-(pyridoxal phosphate)lysine" evidence="1">
    <location>
        <position position="206"/>
    </location>
</feature>
<name>ISCS_SALCH</name>
<organism>
    <name type="scientific">Salmonella choleraesuis (strain SC-B67)</name>
    <dbReference type="NCBI Taxonomy" id="321314"/>
    <lineage>
        <taxon>Bacteria</taxon>
        <taxon>Pseudomonadati</taxon>
        <taxon>Pseudomonadota</taxon>
        <taxon>Gammaproteobacteria</taxon>
        <taxon>Enterobacterales</taxon>
        <taxon>Enterobacteriaceae</taxon>
        <taxon>Salmonella</taxon>
    </lineage>
</organism>
<evidence type="ECO:0000255" key="1">
    <source>
        <dbReference type="HAMAP-Rule" id="MF_00331"/>
    </source>
</evidence>
<protein>
    <recommendedName>
        <fullName evidence="1">Cysteine desulfurase IscS</fullName>
        <ecNumber evidence="1">2.8.1.7</ecNumber>
    </recommendedName>
</protein>
<dbReference type="EC" id="2.8.1.7" evidence="1"/>
<dbReference type="EMBL" id="AE017220">
    <property type="protein sequence ID" value="AAX66443.1"/>
    <property type="molecule type" value="Genomic_DNA"/>
</dbReference>
<dbReference type="RefSeq" id="WP_000775263.1">
    <property type="nucleotide sequence ID" value="NC_006905.1"/>
</dbReference>
<dbReference type="SMR" id="Q57LG9"/>
<dbReference type="KEGG" id="sec:SCH_2537"/>
<dbReference type="HOGENOM" id="CLU_003433_0_2_6"/>
<dbReference type="UniPathway" id="UPA00266"/>
<dbReference type="Proteomes" id="UP000000538">
    <property type="component" value="Chromosome"/>
</dbReference>
<dbReference type="GO" id="GO:1990221">
    <property type="term" value="C:L-cysteine desulfurase complex"/>
    <property type="evidence" value="ECO:0007669"/>
    <property type="project" value="UniProtKB-ARBA"/>
</dbReference>
<dbReference type="GO" id="GO:0051537">
    <property type="term" value="F:2 iron, 2 sulfur cluster binding"/>
    <property type="evidence" value="ECO:0007669"/>
    <property type="project" value="UniProtKB-UniRule"/>
</dbReference>
<dbReference type="GO" id="GO:0031071">
    <property type="term" value="F:cysteine desulfurase activity"/>
    <property type="evidence" value="ECO:0007669"/>
    <property type="project" value="UniProtKB-UniRule"/>
</dbReference>
<dbReference type="GO" id="GO:0046872">
    <property type="term" value="F:metal ion binding"/>
    <property type="evidence" value="ECO:0007669"/>
    <property type="project" value="UniProtKB-KW"/>
</dbReference>
<dbReference type="GO" id="GO:0030170">
    <property type="term" value="F:pyridoxal phosphate binding"/>
    <property type="evidence" value="ECO:0007669"/>
    <property type="project" value="UniProtKB-UniRule"/>
</dbReference>
<dbReference type="GO" id="GO:0044571">
    <property type="term" value="P:[2Fe-2S] cluster assembly"/>
    <property type="evidence" value="ECO:0007669"/>
    <property type="project" value="UniProtKB-UniRule"/>
</dbReference>
<dbReference type="FunFam" id="3.40.640.10:FF:000003">
    <property type="entry name" value="Cysteine desulfurase IscS"/>
    <property type="match status" value="1"/>
</dbReference>
<dbReference type="FunFam" id="3.90.1150.10:FF:000002">
    <property type="entry name" value="Cysteine desulfurase IscS"/>
    <property type="match status" value="1"/>
</dbReference>
<dbReference type="Gene3D" id="3.90.1150.10">
    <property type="entry name" value="Aspartate Aminotransferase, domain 1"/>
    <property type="match status" value="1"/>
</dbReference>
<dbReference type="Gene3D" id="3.40.640.10">
    <property type="entry name" value="Type I PLP-dependent aspartate aminotransferase-like (Major domain)"/>
    <property type="match status" value="1"/>
</dbReference>
<dbReference type="HAMAP" id="MF_00331">
    <property type="entry name" value="Cys_desulf_IscS"/>
    <property type="match status" value="1"/>
</dbReference>
<dbReference type="InterPro" id="IPR000192">
    <property type="entry name" value="Aminotrans_V_dom"/>
</dbReference>
<dbReference type="InterPro" id="IPR020578">
    <property type="entry name" value="Aminotrans_V_PyrdxlP_BS"/>
</dbReference>
<dbReference type="InterPro" id="IPR010240">
    <property type="entry name" value="Cys_deSase_IscS"/>
</dbReference>
<dbReference type="InterPro" id="IPR016454">
    <property type="entry name" value="Cysteine_dSase"/>
</dbReference>
<dbReference type="InterPro" id="IPR015424">
    <property type="entry name" value="PyrdxlP-dep_Trfase"/>
</dbReference>
<dbReference type="InterPro" id="IPR015421">
    <property type="entry name" value="PyrdxlP-dep_Trfase_major"/>
</dbReference>
<dbReference type="InterPro" id="IPR015422">
    <property type="entry name" value="PyrdxlP-dep_Trfase_small"/>
</dbReference>
<dbReference type="NCBIfam" id="TIGR02006">
    <property type="entry name" value="IscS"/>
    <property type="match status" value="1"/>
</dbReference>
<dbReference type="NCBIfam" id="NF002806">
    <property type="entry name" value="PRK02948.1"/>
    <property type="match status" value="1"/>
</dbReference>
<dbReference type="NCBIfam" id="NF010611">
    <property type="entry name" value="PRK14012.1"/>
    <property type="match status" value="1"/>
</dbReference>
<dbReference type="PANTHER" id="PTHR11601:SF34">
    <property type="entry name" value="CYSTEINE DESULFURASE"/>
    <property type="match status" value="1"/>
</dbReference>
<dbReference type="PANTHER" id="PTHR11601">
    <property type="entry name" value="CYSTEINE DESULFURYLASE FAMILY MEMBER"/>
    <property type="match status" value="1"/>
</dbReference>
<dbReference type="Pfam" id="PF00266">
    <property type="entry name" value="Aminotran_5"/>
    <property type="match status" value="1"/>
</dbReference>
<dbReference type="PIRSF" id="PIRSF005572">
    <property type="entry name" value="NifS"/>
    <property type="match status" value="1"/>
</dbReference>
<dbReference type="SUPFAM" id="SSF53383">
    <property type="entry name" value="PLP-dependent transferases"/>
    <property type="match status" value="1"/>
</dbReference>
<dbReference type="PROSITE" id="PS00595">
    <property type="entry name" value="AA_TRANSFER_CLASS_5"/>
    <property type="match status" value="1"/>
</dbReference>
<reference key="1">
    <citation type="journal article" date="2005" name="Nucleic Acids Res.">
        <title>The genome sequence of Salmonella enterica serovar Choleraesuis, a highly invasive and resistant zoonotic pathogen.</title>
        <authorList>
            <person name="Chiu C.-H."/>
            <person name="Tang P."/>
            <person name="Chu C."/>
            <person name="Hu S."/>
            <person name="Bao Q."/>
            <person name="Yu J."/>
            <person name="Chou Y.-Y."/>
            <person name="Wang H.-S."/>
            <person name="Lee Y.-S."/>
        </authorList>
    </citation>
    <scope>NUCLEOTIDE SEQUENCE [LARGE SCALE GENOMIC DNA]</scope>
    <source>
        <strain>SC-B67</strain>
    </source>
</reference>
<accession>Q57LG9</accession>
<sequence length="404" mass="45092">MKLPIYLDYSATTPVDPRVAEKMMQFLTLDGTFGNPASRSHRFGWQAEEAVDIARNQIAELVGADPREIVFTSGATESDNLAIKGAANFYQKKGKHIITSKTEHKAVLDTCRQLEREGFEVTYLAPQRNGIIDLNELEAAMRDDTILVSIMHVNNEIGVVQDIATIGEMCRARGIIYHVDATQSVGKLPIDLSQLKVDLMSFSGHKIYGPKGIGALYVRRKPRIRIEAQMHGGGHERGMRSGTLPVHQIVGMGEAYRIAKEEMETEMARLRGLRNRLWNGIKDIEEVYLNGDLEQGAPNILNVSFNYVEGESLIMALKDLAVSSGSACTSASLEPSYVLRALGMNDELAHSSIRFSLGRFTTEEEIDYTIDLVRKSIGRLRDLSPLWEMYKQGVDLNSIEWAHH</sequence>
<comment type="function">
    <text evidence="1">Master enzyme that delivers sulfur to a number of partners involved in Fe-S cluster assembly, tRNA modification or cofactor biosynthesis. Catalyzes the removal of elemental sulfur and selenium atoms from cysteine and selenocysteine to produce alanine. Functions as a sulfur delivery protein for Fe-S cluster synthesis onto IscU, an Fe-S scaffold assembly protein, as well as other S acceptor proteins. Also functions as a selenium delivery protein in the pathway for the biosynthesis of selenophosphate.</text>
</comment>
<comment type="catalytic activity">
    <reaction evidence="1">
        <text>(sulfur carrier)-H + L-cysteine = (sulfur carrier)-SH + L-alanine</text>
        <dbReference type="Rhea" id="RHEA:43892"/>
        <dbReference type="Rhea" id="RHEA-COMP:14737"/>
        <dbReference type="Rhea" id="RHEA-COMP:14739"/>
        <dbReference type="ChEBI" id="CHEBI:29917"/>
        <dbReference type="ChEBI" id="CHEBI:35235"/>
        <dbReference type="ChEBI" id="CHEBI:57972"/>
        <dbReference type="ChEBI" id="CHEBI:64428"/>
        <dbReference type="EC" id="2.8.1.7"/>
    </reaction>
</comment>
<comment type="cofactor">
    <cofactor evidence="1">
        <name>pyridoxal 5'-phosphate</name>
        <dbReference type="ChEBI" id="CHEBI:597326"/>
    </cofactor>
</comment>
<comment type="pathway">
    <text evidence="1">Cofactor biosynthesis; iron-sulfur cluster biosynthesis.</text>
</comment>
<comment type="subunit">
    <text evidence="1">Homodimer. Forms a heterotetramer with IscU, interacts with other sulfur acceptors.</text>
</comment>
<comment type="subcellular location">
    <subcellularLocation>
        <location evidence="1">Cytoplasm</location>
    </subcellularLocation>
</comment>
<comment type="similarity">
    <text evidence="1">Belongs to the class-V pyridoxal-phosphate-dependent aminotransferase family. NifS/IscS subfamily.</text>
</comment>
<gene>
    <name evidence="1" type="primary">iscS</name>
    <name type="ordered locus">SCH_2537</name>
</gene>
<keyword id="KW-0001">2Fe-2S</keyword>
<keyword id="KW-0963">Cytoplasm</keyword>
<keyword id="KW-0408">Iron</keyword>
<keyword id="KW-0411">Iron-sulfur</keyword>
<keyword id="KW-0479">Metal-binding</keyword>
<keyword id="KW-0663">Pyridoxal phosphate</keyword>
<keyword id="KW-0808">Transferase</keyword>
<proteinExistence type="inferred from homology"/>